<organism>
    <name type="scientific">Elsinoe fawcettii</name>
    <name type="common">Citrus scab fungus</name>
    <name type="synonym">Sphaceloma fawcettii</name>
    <dbReference type="NCBI Taxonomy" id="40997"/>
    <lineage>
        <taxon>Eukaryota</taxon>
        <taxon>Fungi</taxon>
        <taxon>Dikarya</taxon>
        <taxon>Ascomycota</taxon>
        <taxon>Pezizomycotina</taxon>
        <taxon>Dothideomycetes</taxon>
        <taxon>Dothideomycetidae</taxon>
        <taxon>Myriangiales</taxon>
        <taxon>Elsinoaceae</taxon>
        <taxon>Elsinoe</taxon>
    </lineage>
</organism>
<protein>
    <recommendedName>
        <fullName evidence="5">Transcription factor 1</fullName>
    </recommendedName>
    <alternativeName>
        <fullName evidence="5">Elsinochromes biosynthesis cluster protein TSF1</fullName>
    </alternativeName>
</protein>
<name>TSF1_ELSFA</name>
<comment type="function">
    <text evidence="4">Elsinochromes biosynthesis cluster-specific transcription factor that positively regulates the expression of cluster genes including RDT1, PKS1, PRF1 and HP1, and subsequent elsinochromes production.</text>
</comment>
<comment type="subcellular location">
    <subcellularLocation>
        <location evidence="6">Nucleus</location>
    </subcellularLocation>
</comment>
<comment type="induction">
    <text evidence="4">Expression is induced by the presence of the cluster-specific polyketide synthase PKS1 (PubMed:18957608). Expression is up-regulated during nitrogen starvation or at alkaline pH, but repressedin the presence of large amounts of glucose (PubMed:18957608).</text>
</comment>
<comment type="disruption phenotype">
    <text evidence="4">Blocks the expression of the elsinochrome cluster genes RDT1, PKS1, PRF1 and HP1, and impairs the production of elsinochrome.</text>
</comment>
<keyword id="KW-0238">DNA-binding</keyword>
<keyword id="KW-0479">Metal-binding</keyword>
<keyword id="KW-0539">Nucleus</keyword>
<keyword id="KW-0677">Repeat</keyword>
<keyword id="KW-0804">Transcription</keyword>
<keyword id="KW-0805">Transcription regulation</keyword>
<keyword id="KW-0862">Zinc</keyword>
<keyword id="KW-0863">Zinc-finger</keyword>
<proteinExistence type="evidence at transcript level"/>
<gene>
    <name evidence="5" type="primary">TSF1</name>
</gene>
<evidence type="ECO:0000255" key="1">
    <source>
        <dbReference type="PROSITE-ProRule" id="PRU00042"/>
    </source>
</evidence>
<evidence type="ECO:0000255" key="2">
    <source>
        <dbReference type="PROSITE-ProRule" id="PRU00227"/>
    </source>
</evidence>
<evidence type="ECO:0000256" key="3">
    <source>
        <dbReference type="SAM" id="MobiDB-lite"/>
    </source>
</evidence>
<evidence type="ECO:0000269" key="4">
    <source>
    </source>
</evidence>
<evidence type="ECO:0000303" key="5">
    <source>
    </source>
</evidence>
<evidence type="ECO:0000305" key="6"/>
<dbReference type="EMBL" id="EU401705">
    <property type="protein sequence ID" value="ABZ01831.1"/>
    <property type="molecule type" value="Genomic_DNA"/>
</dbReference>
<dbReference type="GO" id="GO:0005634">
    <property type="term" value="C:nucleus"/>
    <property type="evidence" value="ECO:0007669"/>
    <property type="project" value="UniProtKB-SubCell"/>
</dbReference>
<dbReference type="GO" id="GO:0003677">
    <property type="term" value="F:DNA binding"/>
    <property type="evidence" value="ECO:0007669"/>
    <property type="project" value="UniProtKB-KW"/>
</dbReference>
<dbReference type="GO" id="GO:0000981">
    <property type="term" value="F:DNA-binding transcription factor activity, RNA polymerase II-specific"/>
    <property type="evidence" value="ECO:0007669"/>
    <property type="project" value="InterPro"/>
</dbReference>
<dbReference type="GO" id="GO:0008270">
    <property type="term" value="F:zinc ion binding"/>
    <property type="evidence" value="ECO:0007669"/>
    <property type="project" value="UniProtKB-KW"/>
</dbReference>
<dbReference type="GO" id="GO:0006351">
    <property type="term" value="P:DNA-templated transcription"/>
    <property type="evidence" value="ECO:0007669"/>
    <property type="project" value="InterPro"/>
</dbReference>
<dbReference type="CDD" id="cd00067">
    <property type="entry name" value="GAL4"/>
    <property type="match status" value="1"/>
</dbReference>
<dbReference type="Gene3D" id="3.30.160.60">
    <property type="entry name" value="Classic Zinc Finger"/>
    <property type="match status" value="2"/>
</dbReference>
<dbReference type="Gene3D" id="4.10.240.10">
    <property type="entry name" value="Zn(2)-C6 fungal-type DNA-binding domain"/>
    <property type="match status" value="1"/>
</dbReference>
<dbReference type="InterPro" id="IPR007219">
    <property type="entry name" value="Transcription_factor_dom_fun"/>
</dbReference>
<dbReference type="InterPro" id="IPR036864">
    <property type="entry name" value="Zn2-C6_fun-type_DNA-bd_sf"/>
</dbReference>
<dbReference type="InterPro" id="IPR001138">
    <property type="entry name" value="Zn2Cys6_DnaBD"/>
</dbReference>
<dbReference type="InterPro" id="IPR036236">
    <property type="entry name" value="Znf_C2H2_sf"/>
</dbReference>
<dbReference type="InterPro" id="IPR013087">
    <property type="entry name" value="Znf_C2H2_type"/>
</dbReference>
<dbReference type="PANTHER" id="PTHR47660:SF2">
    <property type="entry name" value="TRANSCRIPTION FACTOR WITH C2H2 AND ZN(2)-CYS(6) DNA BINDING DOMAIN (EUROFUNG)"/>
    <property type="match status" value="1"/>
</dbReference>
<dbReference type="PANTHER" id="PTHR47660">
    <property type="entry name" value="TRANSCRIPTION FACTOR WITH C2H2 AND ZN(2)-CYS(6) DNA BINDING DOMAIN (EUROFUNG)-RELATED-RELATED"/>
    <property type="match status" value="1"/>
</dbReference>
<dbReference type="Pfam" id="PF04082">
    <property type="entry name" value="Fungal_trans"/>
    <property type="match status" value="1"/>
</dbReference>
<dbReference type="Pfam" id="PF00172">
    <property type="entry name" value="Zn_clus"/>
    <property type="match status" value="1"/>
</dbReference>
<dbReference type="SMART" id="SM00066">
    <property type="entry name" value="GAL4"/>
    <property type="match status" value="1"/>
</dbReference>
<dbReference type="SMART" id="SM00355">
    <property type="entry name" value="ZnF_C2H2"/>
    <property type="match status" value="2"/>
</dbReference>
<dbReference type="SUPFAM" id="SSF57667">
    <property type="entry name" value="beta-beta-alpha zinc fingers"/>
    <property type="match status" value="1"/>
</dbReference>
<dbReference type="SUPFAM" id="SSF57701">
    <property type="entry name" value="Zn2/Cys6 DNA-binding domain"/>
    <property type="match status" value="1"/>
</dbReference>
<dbReference type="PROSITE" id="PS00028">
    <property type="entry name" value="ZINC_FINGER_C2H2_1"/>
    <property type="match status" value="2"/>
</dbReference>
<dbReference type="PROSITE" id="PS50157">
    <property type="entry name" value="ZINC_FINGER_C2H2_2"/>
    <property type="match status" value="2"/>
</dbReference>
<dbReference type="PROSITE" id="PS00463">
    <property type="entry name" value="ZN2_CY6_FUNGAL_1"/>
    <property type="match status" value="1"/>
</dbReference>
<dbReference type="PROSITE" id="PS50048">
    <property type="entry name" value="ZN2_CY6_FUNGAL_2"/>
    <property type="match status" value="1"/>
</dbReference>
<reference key="1">
    <citation type="journal article" date="2008" name="Microbiology">
        <title>Determination of a transcriptional regulator-like gene involved in biosynthesis of elsinochrome phytotoxin by the citrus scab fungus, Elsinoe fawcettii.</title>
        <authorList>
            <person name="Chung K.R."/>
            <person name="Liao H.L."/>
        </authorList>
    </citation>
    <scope>NUCLEOTIDE SEQUENCE [GENOMIC DNA]</scope>
    <scope>IDENTIFICATION</scope>
    <scope>FUNCTION</scope>
    <scope>DISRUPTION PHENOTYPE</scope>
    <scope>INDUCTION</scope>
</reference>
<reference key="2">
    <citation type="journal article" date="2011" name="Mol. Plant Pathol.">
        <title>Elsinoe fawcettii and Elsinoe australis: the fungal pathogens causing citrus scab.</title>
        <authorList>
            <person name="Chung K.R."/>
        </authorList>
    </citation>
    <scope>REVIEW</scope>
</reference>
<accession>B0ZT45</accession>
<sequence>MVFCTYCGHSFTRDEHLERHILTHTNVKPFKCFTCHMSFARRDLLQGHYTVHGRNQDQQEIPAANGMIPKSAGRTPIACSNCAKTKTKCDKKFPCSRCASRNLRCTLRPTLVSTKNAARMGLITPETIAQDIANGTLPPDQTVAAEKVPLPIAPTGHVEESSKSSSPSGSPTSISHNSTGSDAPPAPMFDQFNGCPTPPQGLSPTTPSGQGFNGPASFPGFDDYNQQIGKTSAEDCNLHFMLDWQQLQLPIGLDPMLQPDMLGDQDLNFDMGAMGLGTQMEPILSINPELTNNMPPPLITPIETPKFDRSSSDLDAFSSGLHDRQYSVVSNQSVDSHYQAPPQPDPVVVAQDGWNVFRCVPSVHPSACPSTARWNLEALESTLQNHDGRSKWRPEVDENLFDGSDQLAVMQIHESTRDKLLAITQGFLHKALEIHRGNEAAQTYAPSNFVLLPPTKVLEYFLRSYTNSFERFYPLTSKGSLDANELMFCYQDRASSLLILLMVAQGAMNVPSREARSLTGGLVETCRISLFDLIERNIVMASDHNVLHAALIFTELASWSGDKWQMDIAMGQRGMYAAMLRHSGVLDRTTYPPQGSFSDGQTNADHMWNLWIQQESRSRPVYSWAMVDQELALFHGASPLFSVTEFGIALPHNEELWRAKSAGEWTSLMGQRVSTTDSDATASPPSLRDLSRRFLDDEMDSAECFLNPMHLRLLLLPLQAMVGHYQQLMCCFSDSGSSRVKNKTVTASSTRCRLEEVQCLLQRWYNIAMDYLKEHSVCSVMQASLVLYHLISLNAVTDFVQIERLARRETFDGTYQSLVWTHKRCITDVGEAIFHCGQVISLIRSMPRSVRPPWWAASIYRVALVLWCDSLIDKDGSSSYGGKSGQTFAVDALPSDHPLIQRYLNKGEGTPRLSKRDGSTIGLDHGLTVLNHCAEIIDEGATSRFQEGIRGKLDRLMRT</sequence>
<feature type="chain" id="PRO_0000445820" description="Transcription factor 1">
    <location>
        <begin position="1"/>
        <end position="959"/>
    </location>
</feature>
<feature type="zinc finger region" description="C2H2-type 1" evidence="1">
    <location>
        <begin position="2"/>
        <end position="24"/>
    </location>
</feature>
<feature type="zinc finger region" description="C2H2-type 2" evidence="1">
    <location>
        <begin position="30"/>
        <end position="52"/>
    </location>
</feature>
<feature type="DNA-binding region" description="Zn(2)-C6 fungal-type" evidence="2">
    <location>
        <begin position="79"/>
        <end position="105"/>
    </location>
</feature>
<feature type="region of interest" description="Disordered" evidence="3">
    <location>
        <begin position="154"/>
        <end position="226"/>
    </location>
</feature>
<feature type="compositionally biased region" description="Low complexity" evidence="3">
    <location>
        <begin position="163"/>
        <end position="178"/>
    </location>
</feature>